<reference key="1">
    <citation type="journal article" date="2009" name="PLoS Genet.">
        <title>Organised genome dynamics in the Escherichia coli species results in highly diverse adaptive paths.</title>
        <authorList>
            <person name="Touchon M."/>
            <person name="Hoede C."/>
            <person name="Tenaillon O."/>
            <person name="Barbe V."/>
            <person name="Baeriswyl S."/>
            <person name="Bidet P."/>
            <person name="Bingen E."/>
            <person name="Bonacorsi S."/>
            <person name="Bouchier C."/>
            <person name="Bouvet O."/>
            <person name="Calteau A."/>
            <person name="Chiapello H."/>
            <person name="Clermont O."/>
            <person name="Cruveiller S."/>
            <person name="Danchin A."/>
            <person name="Diard M."/>
            <person name="Dossat C."/>
            <person name="Karoui M.E."/>
            <person name="Frapy E."/>
            <person name="Garry L."/>
            <person name="Ghigo J.M."/>
            <person name="Gilles A.M."/>
            <person name="Johnson J."/>
            <person name="Le Bouguenec C."/>
            <person name="Lescat M."/>
            <person name="Mangenot S."/>
            <person name="Martinez-Jehanne V."/>
            <person name="Matic I."/>
            <person name="Nassif X."/>
            <person name="Oztas S."/>
            <person name="Petit M.A."/>
            <person name="Pichon C."/>
            <person name="Rouy Z."/>
            <person name="Ruf C.S."/>
            <person name="Schneider D."/>
            <person name="Tourret J."/>
            <person name="Vacherie B."/>
            <person name="Vallenet D."/>
            <person name="Medigue C."/>
            <person name="Rocha E.P.C."/>
            <person name="Denamur E."/>
        </authorList>
    </citation>
    <scope>NUCLEOTIDE SEQUENCE [LARGE SCALE GENOMIC DNA]</scope>
    <source>
        <strain>S88 / ExPEC</strain>
    </source>
</reference>
<name>SECA_ECO45</name>
<keyword id="KW-0067">ATP-binding</keyword>
<keyword id="KW-0997">Cell inner membrane</keyword>
<keyword id="KW-1003">Cell membrane</keyword>
<keyword id="KW-0963">Cytoplasm</keyword>
<keyword id="KW-0472">Membrane</keyword>
<keyword id="KW-0479">Metal-binding</keyword>
<keyword id="KW-0547">Nucleotide-binding</keyword>
<keyword id="KW-0653">Protein transport</keyword>
<keyword id="KW-1185">Reference proteome</keyword>
<keyword id="KW-1278">Translocase</keyword>
<keyword id="KW-0811">Translocation</keyword>
<keyword id="KW-0813">Transport</keyword>
<keyword id="KW-0862">Zinc</keyword>
<comment type="function">
    <text evidence="1">Part of the Sec protein translocase complex. Interacts with the SecYEG preprotein conducting channel. Has a central role in coupling the hydrolysis of ATP to the transfer of proteins into and across the cell membrane, serving both as a receptor for the preprotein-SecB complex and as an ATP-driven molecular motor driving the stepwise translocation of polypeptide chains across the membrane.</text>
</comment>
<comment type="catalytic activity">
    <reaction evidence="1">
        <text>ATP + H2O + cellular proteinSide 1 = ADP + phosphate + cellular proteinSide 2.</text>
        <dbReference type="EC" id="7.4.2.8"/>
    </reaction>
</comment>
<comment type="cofactor">
    <cofactor evidence="1">
        <name>Zn(2+)</name>
        <dbReference type="ChEBI" id="CHEBI:29105"/>
    </cofactor>
    <text evidence="1">May bind 1 zinc ion per subunit.</text>
</comment>
<comment type="subunit">
    <text evidence="1">Monomer and homodimer. Part of the essential Sec protein translocation apparatus which comprises SecA, SecYEG and auxiliary proteins SecDF-YajC and YidC.</text>
</comment>
<comment type="subcellular location">
    <subcellularLocation>
        <location evidence="1">Cell inner membrane</location>
        <topology evidence="1">Peripheral membrane protein</topology>
        <orientation evidence="1">Cytoplasmic side</orientation>
    </subcellularLocation>
    <subcellularLocation>
        <location evidence="1">Cytoplasm</location>
    </subcellularLocation>
    <text evidence="1">Distribution is 50-50.</text>
</comment>
<comment type="induction">
    <text evidence="1">Repressed under conditions of excess protein secretion capacity and derepressed when protein secretion becomes limiting. This is regulated by SecM.</text>
</comment>
<comment type="similarity">
    <text evidence="1">Belongs to the SecA family.</text>
</comment>
<sequence>MLIKLLTKVFGSRNDRTLRRMRKVVNIINAMEPEMEKLSDEELKGKTAEFRARLEKGEVLENLIPEAFAVVREASKRVFGMRHFDVQLLGGMVLNERCIAEMRTGEGKTLTATLPAYLNALTGKGVHVVTVNDYLAQRDAENNRPLFEFLGLTVGINLPGMPAPAKREAYAADITYGTNNEYGFDYLRDNMAFSPEERVQRKLHYALVDEVDSILIDEARTPLIISGPAEDSSEMYKRVNKIIPHLIRQEKEDSETFQGEGHFSVDEKSRQVNLTERGLVLIEELLVKEGIMDEGESLYSPANIMLMHHVTAALRAHALFTRDVDYIVKDGEVIIVDEHTGRTMQGRRWSDGLHQAVEAKEGVQIQNENQTLASITFQNYFRLYEKLAGMTGTADTEAFEFSSIYKLDTVVVPTNRPMIRKDLPDLVYMTEAEKIQAIIEDIKERTAKGQPVLVGTISIEKSELVSNELTKAGIKHNVLNAKFHANEAAIVAQAGYPAAVTIATNMAGRGTDIVLGGSWQAEVAALENPTAEQIEKIKADWQVRHDAVLAAGGLHIIGTERHESRRIDNQLRGRSGRQGDAGSSRFYLSMEDALMRIFASDRVSGMMRKLGMKPGEAIEHPWVTKAIANAQRKVESRNFDIRKQLLEYDDVANDQRRAIYSQRNELLDVSDVSETINSIREDVFKATIDAYIPPQSLEEMWDIPGLQERLKNDFDLDLPIAEWLDKEPELHEETLRERILAQSIEVYQRKEEVVGAEMMRHFEKGVMLQTLDSLWKEHLAAMDYLRQGIHLRGYAQKDPKQEYKRESFSMFAAMLESLKYEVISTLSKVQVRMPEEVEELEQQRRMEAERLAQMQQLSYQDDDSAAAAALAAQTGERKVGRNDPCPCGSGKKYKQCHGRLQ</sequence>
<organism>
    <name type="scientific">Escherichia coli O45:K1 (strain S88 / ExPEC)</name>
    <dbReference type="NCBI Taxonomy" id="585035"/>
    <lineage>
        <taxon>Bacteria</taxon>
        <taxon>Pseudomonadati</taxon>
        <taxon>Pseudomonadota</taxon>
        <taxon>Gammaproteobacteria</taxon>
        <taxon>Enterobacterales</taxon>
        <taxon>Enterobacteriaceae</taxon>
        <taxon>Escherichia</taxon>
    </lineage>
</organism>
<proteinExistence type="inferred from homology"/>
<evidence type="ECO:0000255" key="1">
    <source>
        <dbReference type="HAMAP-Rule" id="MF_01382"/>
    </source>
</evidence>
<evidence type="ECO:0000256" key="2">
    <source>
        <dbReference type="SAM" id="MobiDB-lite"/>
    </source>
</evidence>
<accession>B7MAM1</accession>
<dbReference type="EC" id="7.4.2.8" evidence="1"/>
<dbReference type="EMBL" id="CU928161">
    <property type="protein sequence ID" value="CAR01467.1"/>
    <property type="molecule type" value="Genomic_DNA"/>
</dbReference>
<dbReference type="RefSeq" id="WP_000905783.1">
    <property type="nucleotide sequence ID" value="NC_011742.1"/>
</dbReference>
<dbReference type="SMR" id="B7MAM1"/>
<dbReference type="KEGG" id="ecz:ECS88_0102"/>
<dbReference type="HOGENOM" id="CLU_005314_3_0_6"/>
<dbReference type="Proteomes" id="UP000000747">
    <property type="component" value="Chromosome"/>
</dbReference>
<dbReference type="GO" id="GO:0031522">
    <property type="term" value="C:cell envelope Sec protein transport complex"/>
    <property type="evidence" value="ECO:0007669"/>
    <property type="project" value="TreeGrafter"/>
</dbReference>
<dbReference type="GO" id="GO:0005829">
    <property type="term" value="C:cytosol"/>
    <property type="evidence" value="ECO:0007669"/>
    <property type="project" value="TreeGrafter"/>
</dbReference>
<dbReference type="GO" id="GO:0005886">
    <property type="term" value="C:plasma membrane"/>
    <property type="evidence" value="ECO:0007669"/>
    <property type="project" value="UniProtKB-SubCell"/>
</dbReference>
<dbReference type="GO" id="GO:0005524">
    <property type="term" value="F:ATP binding"/>
    <property type="evidence" value="ECO:0007669"/>
    <property type="project" value="UniProtKB-UniRule"/>
</dbReference>
<dbReference type="GO" id="GO:0046872">
    <property type="term" value="F:metal ion binding"/>
    <property type="evidence" value="ECO:0007669"/>
    <property type="project" value="UniProtKB-KW"/>
</dbReference>
<dbReference type="GO" id="GO:0008564">
    <property type="term" value="F:protein-exporting ATPase activity"/>
    <property type="evidence" value="ECO:0007669"/>
    <property type="project" value="UniProtKB-EC"/>
</dbReference>
<dbReference type="GO" id="GO:0065002">
    <property type="term" value="P:intracellular protein transmembrane transport"/>
    <property type="evidence" value="ECO:0007669"/>
    <property type="project" value="UniProtKB-UniRule"/>
</dbReference>
<dbReference type="GO" id="GO:0017038">
    <property type="term" value="P:protein import"/>
    <property type="evidence" value="ECO:0007669"/>
    <property type="project" value="InterPro"/>
</dbReference>
<dbReference type="GO" id="GO:0006605">
    <property type="term" value="P:protein targeting"/>
    <property type="evidence" value="ECO:0007669"/>
    <property type="project" value="UniProtKB-UniRule"/>
</dbReference>
<dbReference type="GO" id="GO:0043952">
    <property type="term" value="P:protein transport by the Sec complex"/>
    <property type="evidence" value="ECO:0007669"/>
    <property type="project" value="TreeGrafter"/>
</dbReference>
<dbReference type="CDD" id="cd17928">
    <property type="entry name" value="DEXDc_SecA"/>
    <property type="match status" value="1"/>
</dbReference>
<dbReference type="CDD" id="cd18803">
    <property type="entry name" value="SF2_C_secA"/>
    <property type="match status" value="1"/>
</dbReference>
<dbReference type="FunFam" id="1.10.3060.10:FF:000001">
    <property type="entry name" value="Preprotein translocase subunit SecA"/>
    <property type="match status" value="1"/>
</dbReference>
<dbReference type="FunFam" id="3.40.50.300:FF:000081">
    <property type="entry name" value="Preprotein translocase subunit SecA"/>
    <property type="match status" value="1"/>
</dbReference>
<dbReference type="FunFam" id="3.40.50.300:FF:000113">
    <property type="entry name" value="Preprotein translocase subunit SecA"/>
    <property type="match status" value="1"/>
</dbReference>
<dbReference type="FunFam" id="3.90.1440.10:FF:000001">
    <property type="entry name" value="Preprotein translocase subunit SecA"/>
    <property type="match status" value="1"/>
</dbReference>
<dbReference type="Gene3D" id="1.10.3060.10">
    <property type="entry name" value="Helical scaffold and wing domains of SecA"/>
    <property type="match status" value="1"/>
</dbReference>
<dbReference type="Gene3D" id="3.40.50.300">
    <property type="entry name" value="P-loop containing nucleotide triphosphate hydrolases"/>
    <property type="match status" value="2"/>
</dbReference>
<dbReference type="Gene3D" id="3.90.1440.10">
    <property type="entry name" value="SecA, preprotein cross-linking domain"/>
    <property type="match status" value="1"/>
</dbReference>
<dbReference type="HAMAP" id="MF_01382">
    <property type="entry name" value="SecA"/>
    <property type="match status" value="1"/>
</dbReference>
<dbReference type="InterPro" id="IPR014001">
    <property type="entry name" value="Helicase_ATP-bd"/>
</dbReference>
<dbReference type="InterPro" id="IPR001650">
    <property type="entry name" value="Helicase_C-like"/>
</dbReference>
<dbReference type="InterPro" id="IPR027417">
    <property type="entry name" value="P-loop_NTPase"/>
</dbReference>
<dbReference type="InterPro" id="IPR004027">
    <property type="entry name" value="SEC_C_motif"/>
</dbReference>
<dbReference type="InterPro" id="IPR000185">
    <property type="entry name" value="SecA"/>
</dbReference>
<dbReference type="InterPro" id="IPR020937">
    <property type="entry name" value="SecA_CS"/>
</dbReference>
<dbReference type="InterPro" id="IPR011115">
    <property type="entry name" value="SecA_DEAD"/>
</dbReference>
<dbReference type="InterPro" id="IPR014018">
    <property type="entry name" value="SecA_motor_DEAD"/>
</dbReference>
<dbReference type="InterPro" id="IPR011130">
    <property type="entry name" value="SecA_preprotein_X-link_dom"/>
</dbReference>
<dbReference type="InterPro" id="IPR044722">
    <property type="entry name" value="SecA_SF2_C"/>
</dbReference>
<dbReference type="InterPro" id="IPR011116">
    <property type="entry name" value="SecA_Wing/Scaffold"/>
</dbReference>
<dbReference type="InterPro" id="IPR036266">
    <property type="entry name" value="SecA_Wing/Scaffold_sf"/>
</dbReference>
<dbReference type="InterPro" id="IPR036670">
    <property type="entry name" value="SecA_X-link_sf"/>
</dbReference>
<dbReference type="NCBIfam" id="NF009538">
    <property type="entry name" value="PRK12904.1"/>
    <property type="match status" value="1"/>
</dbReference>
<dbReference type="NCBIfam" id="TIGR00963">
    <property type="entry name" value="secA"/>
    <property type="match status" value="1"/>
</dbReference>
<dbReference type="PANTHER" id="PTHR30612:SF0">
    <property type="entry name" value="CHLOROPLAST PROTEIN-TRANSPORTING ATPASE"/>
    <property type="match status" value="1"/>
</dbReference>
<dbReference type="PANTHER" id="PTHR30612">
    <property type="entry name" value="SECA INNER MEMBRANE COMPONENT OF SEC PROTEIN SECRETION SYSTEM"/>
    <property type="match status" value="1"/>
</dbReference>
<dbReference type="Pfam" id="PF21090">
    <property type="entry name" value="P-loop_SecA"/>
    <property type="match status" value="1"/>
</dbReference>
<dbReference type="Pfam" id="PF02810">
    <property type="entry name" value="SEC-C"/>
    <property type="match status" value="1"/>
</dbReference>
<dbReference type="Pfam" id="PF07517">
    <property type="entry name" value="SecA_DEAD"/>
    <property type="match status" value="1"/>
</dbReference>
<dbReference type="Pfam" id="PF01043">
    <property type="entry name" value="SecA_PP_bind"/>
    <property type="match status" value="1"/>
</dbReference>
<dbReference type="Pfam" id="PF07516">
    <property type="entry name" value="SecA_SW"/>
    <property type="match status" value="1"/>
</dbReference>
<dbReference type="PRINTS" id="PR00906">
    <property type="entry name" value="SECA"/>
</dbReference>
<dbReference type="SMART" id="SM00957">
    <property type="entry name" value="SecA_DEAD"/>
    <property type="match status" value="1"/>
</dbReference>
<dbReference type="SMART" id="SM00958">
    <property type="entry name" value="SecA_PP_bind"/>
    <property type="match status" value="1"/>
</dbReference>
<dbReference type="SUPFAM" id="SSF81886">
    <property type="entry name" value="Helical scaffold and wing domains of SecA"/>
    <property type="match status" value="1"/>
</dbReference>
<dbReference type="SUPFAM" id="SSF52540">
    <property type="entry name" value="P-loop containing nucleoside triphosphate hydrolases"/>
    <property type="match status" value="2"/>
</dbReference>
<dbReference type="SUPFAM" id="SSF81767">
    <property type="entry name" value="Pre-protein crosslinking domain of SecA"/>
    <property type="match status" value="1"/>
</dbReference>
<dbReference type="PROSITE" id="PS01312">
    <property type="entry name" value="SECA"/>
    <property type="match status" value="1"/>
</dbReference>
<dbReference type="PROSITE" id="PS51196">
    <property type="entry name" value="SECA_MOTOR_DEAD"/>
    <property type="match status" value="1"/>
</dbReference>
<protein>
    <recommendedName>
        <fullName evidence="1">Protein translocase subunit SecA</fullName>
        <ecNumber evidence="1">7.4.2.8</ecNumber>
    </recommendedName>
</protein>
<gene>
    <name evidence="1" type="primary">secA</name>
    <name type="ordered locus">ECS88_0102</name>
</gene>
<feature type="chain" id="PRO_1000145005" description="Protein translocase subunit SecA">
    <location>
        <begin position="1"/>
        <end position="901"/>
    </location>
</feature>
<feature type="region of interest" description="Disordered" evidence="2">
    <location>
        <begin position="868"/>
        <end position="901"/>
    </location>
</feature>
<feature type="compositionally biased region" description="Basic residues" evidence="2">
    <location>
        <begin position="891"/>
        <end position="901"/>
    </location>
</feature>
<feature type="binding site" evidence="1">
    <location>
        <position position="87"/>
    </location>
    <ligand>
        <name>ATP</name>
        <dbReference type="ChEBI" id="CHEBI:30616"/>
    </ligand>
</feature>
<feature type="binding site" evidence="1">
    <location>
        <begin position="105"/>
        <end position="109"/>
    </location>
    <ligand>
        <name>ATP</name>
        <dbReference type="ChEBI" id="CHEBI:30616"/>
    </ligand>
</feature>
<feature type="binding site" evidence="1">
    <location>
        <position position="512"/>
    </location>
    <ligand>
        <name>ATP</name>
        <dbReference type="ChEBI" id="CHEBI:30616"/>
    </ligand>
</feature>
<feature type="binding site" evidence="1">
    <location>
        <position position="885"/>
    </location>
    <ligand>
        <name>Zn(2+)</name>
        <dbReference type="ChEBI" id="CHEBI:29105"/>
    </ligand>
</feature>
<feature type="binding site" evidence="1">
    <location>
        <position position="887"/>
    </location>
    <ligand>
        <name>Zn(2+)</name>
        <dbReference type="ChEBI" id="CHEBI:29105"/>
    </ligand>
</feature>
<feature type="binding site" evidence="1">
    <location>
        <position position="896"/>
    </location>
    <ligand>
        <name>Zn(2+)</name>
        <dbReference type="ChEBI" id="CHEBI:29105"/>
    </ligand>
</feature>
<feature type="binding site" evidence="1">
    <location>
        <position position="897"/>
    </location>
    <ligand>
        <name>Zn(2+)</name>
        <dbReference type="ChEBI" id="CHEBI:29105"/>
    </ligand>
</feature>